<comment type="function">
    <text evidence="1">Catalyzes the addition and repair of the essential 3'-terminal CCA sequence in tRNAs without using a nucleic acid template. Adds these three nucleotides in the order of C, C, and A to the tRNA nucleotide-73, using CTP and ATP as substrates and producing inorganic pyrophosphate. tRNA 3'-terminal CCA addition is required both for tRNA processing and repair. Also involved in tRNA surveillance by mediating tandem CCA addition to generate a CCACCA at the 3' terminus of unstable tRNAs. While stable tRNAs receive only 3'-terminal CCA, unstable tRNAs are marked with CCACCA and rapidly degraded.</text>
</comment>
<comment type="catalytic activity">
    <reaction evidence="1">
        <text>a tRNA precursor + 2 CTP + ATP = a tRNA with a 3' CCA end + 3 diphosphate</text>
        <dbReference type="Rhea" id="RHEA:14433"/>
        <dbReference type="Rhea" id="RHEA-COMP:10465"/>
        <dbReference type="Rhea" id="RHEA-COMP:10468"/>
        <dbReference type="ChEBI" id="CHEBI:30616"/>
        <dbReference type="ChEBI" id="CHEBI:33019"/>
        <dbReference type="ChEBI" id="CHEBI:37563"/>
        <dbReference type="ChEBI" id="CHEBI:74896"/>
        <dbReference type="ChEBI" id="CHEBI:83071"/>
        <dbReference type="EC" id="2.7.7.72"/>
    </reaction>
</comment>
<comment type="catalytic activity">
    <reaction evidence="1">
        <text>a tRNA with a 3' CCA end + 2 CTP + ATP = a tRNA with a 3' CCACCA end + 3 diphosphate</text>
        <dbReference type="Rhea" id="RHEA:76235"/>
        <dbReference type="Rhea" id="RHEA-COMP:10468"/>
        <dbReference type="Rhea" id="RHEA-COMP:18655"/>
        <dbReference type="ChEBI" id="CHEBI:30616"/>
        <dbReference type="ChEBI" id="CHEBI:33019"/>
        <dbReference type="ChEBI" id="CHEBI:37563"/>
        <dbReference type="ChEBI" id="CHEBI:83071"/>
        <dbReference type="ChEBI" id="CHEBI:195187"/>
    </reaction>
    <physiologicalReaction direction="left-to-right" evidence="1">
        <dbReference type="Rhea" id="RHEA:76236"/>
    </physiologicalReaction>
</comment>
<comment type="cofactor">
    <cofactor evidence="1">
        <name>Mg(2+)</name>
        <dbReference type="ChEBI" id="CHEBI:18420"/>
    </cofactor>
</comment>
<comment type="subunit">
    <text evidence="1">Homodimer.</text>
</comment>
<comment type="miscellaneous">
    <text evidence="1">A single active site specifically recognizes both ATP and CTP and is responsible for their addition.</text>
</comment>
<comment type="similarity">
    <text evidence="1">Belongs to the tRNA nucleotidyltransferase/poly(A) polymerase family. Bacterial CCA-adding enzyme type 3 subfamily.</text>
</comment>
<accession>Q1JCB2</accession>
<protein>
    <recommendedName>
        <fullName evidence="1">CCA-adding enzyme</fullName>
        <ecNumber evidence="1">2.7.7.72</ecNumber>
    </recommendedName>
    <alternativeName>
        <fullName evidence="1">CCA tRNA nucleotidyltransferase</fullName>
    </alternativeName>
    <alternativeName>
        <fullName evidence="1">tRNA CCA-pyrophosphorylase</fullName>
    </alternativeName>
    <alternativeName>
        <fullName evidence="1">tRNA adenylyl-/cytidylyl- transferase</fullName>
    </alternativeName>
    <alternativeName>
        <fullName evidence="1">tRNA nucleotidyltransferase</fullName>
    </alternativeName>
    <alternativeName>
        <fullName evidence="1">tRNA-NT</fullName>
    </alternativeName>
</protein>
<reference key="1">
    <citation type="journal article" date="2006" name="Proc. Natl. Acad. Sci. U.S.A.">
        <title>Molecular genetic anatomy of inter- and intraserotype variation in the human bacterial pathogen group A Streptococcus.</title>
        <authorList>
            <person name="Beres S.B."/>
            <person name="Richter E.W."/>
            <person name="Nagiec M.J."/>
            <person name="Sumby P."/>
            <person name="Porcella S.F."/>
            <person name="DeLeo F.R."/>
            <person name="Musser J.M."/>
        </authorList>
    </citation>
    <scope>NUCLEOTIDE SEQUENCE [LARGE SCALE GENOMIC DNA]</scope>
    <source>
        <strain>MGAS2096</strain>
    </source>
</reference>
<dbReference type="EC" id="2.7.7.72" evidence="1"/>
<dbReference type="EMBL" id="CP000261">
    <property type="protein sequence ID" value="ABF35796.1"/>
    <property type="molecule type" value="Genomic_DNA"/>
</dbReference>
<dbReference type="SMR" id="Q1JCB2"/>
<dbReference type="KEGG" id="spj:MGAS2096_Spy0744"/>
<dbReference type="HOGENOM" id="CLU_015961_3_1_9"/>
<dbReference type="GO" id="GO:0005524">
    <property type="term" value="F:ATP binding"/>
    <property type="evidence" value="ECO:0007669"/>
    <property type="project" value="UniProtKB-UniRule"/>
</dbReference>
<dbReference type="GO" id="GO:0004810">
    <property type="term" value="F:CCA tRNA nucleotidyltransferase activity"/>
    <property type="evidence" value="ECO:0007669"/>
    <property type="project" value="UniProtKB-UniRule"/>
</dbReference>
<dbReference type="GO" id="GO:0000287">
    <property type="term" value="F:magnesium ion binding"/>
    <property type="evidence" value="ECO:0007669"/>
    <property type="project" value="UniProtKB-UniRule"/>
</dbReference>
<dbReference type="GO" id="GO:0000049">
    <property type="term" value="F:tRNA binding"/>
    <property type="evidence" value="ECO:0007669"/>
    <property type="project" value="UniProtKB-UniRule"/>
</dbReference>
<dbReference type="GO" id="GO:0042245">
    <property type="term" value="P:RNA repair"/>
    <property type="evidence" value="ECO:0007669"/>
    <property type="project" value="UniProtKB-KW"/>
</dbReference>
<dbReference type="GO" id="GO:0001680">
    <property type="term" value="P:tRNA 3'-terminal CCA addition"/>
    <property type="evidence" value="ECO:0007669"/>
    <property type="project" value="UniProtKB-UniRule"/>
</dbReference>
<dbReference type="CDD" id="cd05398">
    <property type="entry name" value="NT_ClassII-CCAase"/>
    <property type="match status" value="1"/>
</dbReference>
<dbReference type="Gene3D" id="1.10.110.30">
    <property type="match status" value="1"/>
</dbReference>
<dbReference type="Gene3D" id="1.10.246.80">
    <property type="match status" value="1"/>
</dbReference>
<dbReference type="Gene3D" id="1.20.58.560">
    <property type="match status" value="1"/>
</dbReference>
<dbReference type="Gene3D" id="3.30.460.10">
    <property type="entry name" value="Beta Polymerase, domain 2"/>
    <property type="match status" value="1"/>
</dbReference>
<dbReference type="HAMAP" id="MF_01263">
    <property type="entry name" value="CCA_bact_type3"/>
    <property type="match status" value="1"/>
</dbReference>
<dbReference type="InterPro" id="IPR050264">
    <property type="entry name" value="Bact_CCA-adding_enz_type3_sf"/>
</dbReference>
<dbReference type="InterPro" id="IPR032810">
    <property type="entry name" value="CCA-adding_enz_C"/>
</dbReference>
<dbReference type="InterPro" id="IPR023068">
    <property type="entry name" value="CCA-adding_enz_firmicutes"/>
</dbReference>
<dbReference type="InterPro" id="IPR043519">
    <property type="entry name" value="NT_sf"/>
</dbReference>
<dbReference type="InterPro" id="IPR002646">
    <property type="entry name" value="PolA_pol_head_dom"/>
</dbReference>
<dbReference type="InterPro" id="IPR032828">
    <property type="entry name" value="PolyA_RNA-bd"/>
</dbReference>
<dbReference type="NCBIfam" id="NF009814">
    <property type="entry name" value="PRK13299.1"/>
    <property type="match status" value="1"/>
</dbReference>
<dbReference type="PANTHER" id="PTHR46173">
    <property type="entry name" value="CCA TRNA NUCLEOTIDYLTRANSFERASE 1, MITOCHONDRIAL"/>
    <property type="match status" value="1"/>
</dbReference>
<dbReference type="PANTHER" id="PTHR46173:SF1">
    <property type="entry name" value="CCA TRNA NUCLEOTIDYLTRANSFERASE 1, MITOCHONDRIAL"/>
    <property type="match status" value="1"/>
</dbReference>
<dbReference type="Pfam" id="PF01743">
    <property type="entry name" value="PolyA_pol"/>
    <property type="match status" value="1"/>
</dbReference>
<dbReference type="Pfam" id="PF12627">
    <property type="entry name" value="PolyA_pol_RNAbd"/>
    <property type="match status" value="1"/>
</dbReference>
<dbReference type="Pfam" id="PF13735">
    <property type="entry name" value="tRNA_NucTran2_2"/>
    <property type="match status" value="1"/>
</dbReference>
<dbReference type="SUPFAM" id="SSF81301">
    <property type="entry name" value="Nucleotidyltransferase"/>
    <property type="match status" value="1"/>
</dbReference>
<dbReference type="SUPFAM" id="SSF81891">
    <property type="entry name" value="Poly A polymerase C-terminal region-like"/>
    <property type="match status" value="1"/>
</dbReference>
<organism>
    <name type="scientific">Streptococcus pyogenes serotype M12 (strain MGAS2096)</name>
    <dbReference type="NCBI Taxonomy" id="370553"/>
    <lineage>
        <taxon>Bacteria</taxon>
        <taxon>Bacillati</taxon>
        <taxon>Bacillota</taxon>
        <taxon>Bacilli</taxon>
        <taxon>Lactobacillales</taxon>
        <taxon>Streptococcaceae</taxon>
        <taxon>Streptococcus</taxon>
    </lineage>
</organism>
<sequence length="402" mass="46069">MKLMTMPSEFQKALPILTKIKEAGYEAYFVGGSVRDVLLERPIHDVDIATSSYPEETKAIFNRTVDVGIEHGTVLVLENGGEYEITTFRTEDVYVDYRRPSQVSFVRSLEEDLKRRDFTVNALALDENGQVIDKFRGLIDLEQKRLRAVGKAEERFEEDALRIMRGFRFAASLDFDIEAATFEAMRSHSPLLEKISVERSFTEFDKLLMAPHWRKGISAMIACQAYDYLPGLKQQEAGLNHLIVSLKDNFTFSDHHQAWAYVMISLAIEDPKSFLKAWKTSNDFQRYVTKLIALYRIRQERSFEKLDIYQYGKEMASLVEGLRKAQSLSVDMDHIEALDQALAIHNKYDIVLNGSHLIKDFGMKPGPQLGLMLEKVELAIVEGRLDNDFTTIEAFVREELAT</sequence>
<name>CCA_STRPB</name>
<gene>
    <name evidence="1" type="primary">cca</name>
    <name type="ordered locus">MGAS2096_Spy0744</name>
</gene>
<feature type="chain" id="PRO_1000054337" description="CCA-adding enzyme">
    <location>
        <begin position="1"/>
        <end position="402"/>
    </location>
</feature>
<feature type="binding site" evidence="1">
    <location>
        <position position="32"/>
    </location>
    <ligand>
        <name>ATP</name>
        <dbReference type="ChEBI" id="CHEBI:30616"/>
    </ligand>
</feature>
<feature type="binding site" evidence="1">
    <location>
        <position position="32"/>
    </location>
    <ligand>
        <name>CTP</name>
        <dbReference type="ChEBI" id="CHEBI:37563"/>
    </ligand>
</feature>
<feature type="binding site" evidence="1">
    <location>
        <position position="35"/>
    </location>
    <ligand>
        <name>ATP</name>
        <dbReference type="ChEBI" id="CHEBI:30616"/>
    </ligand>
</feature>
<feature type="binding site" evidence="1">
    <location>
        <position position="35"/>
    </location>
    <ligand>
        <name>CTP</name>
        <dbReference type="ChEBI" id="CHEBI:37563"/>
    </ligand>
</feature>
<feature type="binding site" evidence="1">
    <location>
        <position position="45"/>
    </location>
    <ligand>
        <name>Mg(2+)</name>
        <dbReference type="ChEBI" id="CHEBI:18420"/>
    </ligand>
</feature>
<feature type="binding site" evidence="1">
    <location>
        <position position="47"/>
    </location>
    <ligand>
        <name>Mg(2+)</name>
        <dbReference type="ChEBI" id="CHEBI:18420"/>
    </ligand>
</feature>
<feature type="binding site" evidence="1">
    <location>
        <position position="116"/>
    </location>
    <ligand>
        <name>ATP</name>
        <dbReference type="ChEBI" id="CHEBI:30616"/>
    </ligand>
</feature>
<feature type="binding site" evidence="1">
    <location>
        <position position="116"/>
    </location>
    <ligand>
        <name>CTP</name>
        <dbReference type="ChEBI" id="CHEBI:37563"/>
    </ligand>
</feature>
<feature type="binding site" evidence="1">
    <location>
        <position position="159"/>
    </location>
    <ligand>
        <name>ATP</name>
        <dbReference type="ChEBI" id="CHEBI:30616"/>
    </ligand>
</feature>
<feature type="binding site" evidence="1">
    <location>
        <position position="159"/>
    </location>
    <ligand>
        <name>CTP</name>
        <dbReference type="ChEBI" id="CHEBI:37563"/>
    </ligand>
</feature>
<feature type="binding site" evidence="1">
    <location>
        <position position="162"/>
    </location>
    <ligand>
        <name>ATP</name>
        <dbReference type="ChEBI" id="CHEBI:30616"/>
    </ligand>
</feature>
<feature type="binding site" evidence="1">
    <location>
        <position position="162"/>
    </location>
    <ligand>
        <name>CTP</name>
        <dbReference type="ChEBI" id="CHEBI:37563"/>
    </ligand>
</feature>
<feature type="binding site" evidence="1">
    <location>
        <position position="165"/>
    </location>
    <ligand>
        <name>ATP</name>
        <dbReference type="ChEBI" id="CHEBI:30616"/>
    </ligand>
</feature>
<feature type="binding site" evidence="1">
    <location>
        <position position="165"/>
    </location>
    <ligand>
        <name>CTP</name>
        <dbReference type="ChEBI" id="CHEBI:37563"/>
    </ligand>
</feature>
<feature type="binding site" evidence="1">
    <location>
        <position position="168"/>
    </location>
    <ligand>
        <name>ATP</name>
        <dbReference type="ChEBI" id="CHEBI:30616"/>
    </ligand>
</feature>
<feature type="binding site" evidence="1">
    <location>
        <position position="168"/>
    </location>
    <ligand>
        <name>CTP</name>
        <dbReference type="ChEBI" id="CHEBI:37563"/>
    </ligand>
</feature>
<proteinExistence type="inferred from homology"/>
<keyword id="KW-0067">ATP-binding</keyword>
<keyword id="KW-0460">Magnesium</keyword>
<keyword id="KW-0479">Metal-binding</keyword>
<keyword id="KW-0547">Nucleotide-binding</keyword>
<keyword id="KW-0548">Nucleotidyltransferase</keyword>
<keyword id="KW-0692">RNA repair</keyword>
<keyword id="KW-0694">RNA-binding</keyword>
<keyword id="KW-0808">Transferase</keyword>
<keyword id="KW-0819">tRNA processing</keyword>
<evidence type="ECO:0000255" key="1">
    <source>
        <dbReference type="HAMAP-Rule" id="MF_01263"/>
    </source>
</evidence>